<comment type="function">
    <text evidence="2 3">Catalyzes the production of glutathione from gamma-glutamylcysteine and glycine in an ATP-dependent manner. Glutathione (gamma-glutamylcysteinylglycine, GSH) is the most abundant intracellular thiol in living aerobic cells and is required for numerous processes including the protection of cells against oxidative damage, amino acid transport, the detoxification of foreign compounds, the maintenance of protein sulfhydryl groups in a reduced state and acts as a cofactor for a number of enzymes. Participates in ophthalmate biosynthesis in hepatocytes (By similarity).</text>
</comment>
<comment type="catalytic activity">
    <reaction evidence="2">
        <text>gamma-L-glutamyl-L-cysteine + glycine + ATP = glutathione + ADP + phosphate + H(+)</text>
        <dbReference type="Rhea" id="RHEA:13557"/>
        <dbReference type="ChEBI" id="CHEBI:15378"/>
        <dbReference type="ChEBI" id="CHEBI:30616"/>
        <dbReference type="ChEBI" id="CHEBI:43474"/>
        <dbReference type="ChEBI" id="CHEBI:57305"/>
        <dbReference type="ChEBI" id="CHEBI:57925"/>
        <dbReference type="ChEBI" id="CHEBI:58173"/>
        <dbReference type="ChEBI" id="CHEBI:456216"/>
        <dbReference type="EC" id="6.3.2.3"/>
    </reaction>
    <physiologicalReaction direction="left-to-right" evidence="2">
        <dbReference type="Rhea" id="RHEA:13558"/>
    </physiologicalReaction>
</comment>
<comment type="catalytic activity">
    <reaction evidence="3">
        <text>gamma-L-glutamyl-(2S)-2-aminobutanoate + glycine + ATP = ophthalmate + ADP + phosphate + H(+)</text>
        <dbReference type="Rhea" id="RHEA:72075"/>
        <dbReference type="ChEBI" id="CHEBI:15378"/>
        <dbReference type="ChEBI" id="CHEBI:30616"/>
        <dbReference type="ChEBI" id="CHEBI:43474"/>
        <dbReference type="ChEBI" id="CHEBI:57305"/>
        <dbReference type="ChEBI" id="CHEBI:189406"/>
        <dbReference type="ChEBI" id="CHEBI:189750"/>
        <dbReference type="ChEBI" id="CHEBI:456216"/>
    </reaction>
    <physiologicalReaction direction="left-to-right" evidence="3">
        <dbReference type="Rhea" id="RHEA:72076"/>
    </physiologicalReaction>
</comment>
<comment type="cofactor">
    <cofactor evidence="2">
        <name>Mg(2+)</name>
        <dbReference type="ChEBI" id="CHEBI:18420"/>
    </cofactor>
    <text evidence="2">Binds 1 Mg(2+) ion per subunit.</text>
</comment>
<comment type="pathway">
    <text evidence="2">Sulfur metabolism; glutathione biosynthesis; glutathione from L-cysteine and L-glutamate: step 2/2.</text>
</comment>
<comment type="subunit">
    <text evidence="2">Homodimer.</text>
</comment>
<comment type="similarity">
    <text evidence="4">Belongs to the eukaryotic GSH synthase family.</text>
</comment>
<dbReference type="EC" id="6.3.2.3" evidence="2"/>
<dbReference type="EMBL" id="BT020647">
    <property type="protein sequence ID" value="AAX08664.1"/>
    <property type="molecule type" value="mRNA"/>
</dbReference>
<dbReference type="EMBL" id="BC109713">
    <property type="protein sequence ID" value="AAI09714.1"/>
    <property type="molecule type" value="mRNA"/>
</dbReference>
<dbReference type="RefSeq" id="NP_001015630.1">
    <property type="nucleotide sequence ID" value="NM_001015630.1"/>
</dbReference>
<dbReference type="RefSeq" id="XP_005214785.1">
    <property type="nucleotide sequence ID" value="XM_005214728.3"/>
</dbReference>
<dbReference type="SMR" id="Q5EAC2"/>
<dbReference type="FunCoup" id="Q5EAC2">
    <property type="interactions" value="3199"/>
</dbReference>
<dbReference type="STRING" id="9913.ENSBTAP00000004559"/>
<dbReference type="PaxDb" id="9913-ENSBTAP00000004559"/>
<dbReference type="PeptideAtlas" id="Q5EAC2"/>
<dbReference type="GeneID" id="525059"/>
<dbReference type="KEGG" id="bta:525059"/>
<dbReference type="CTD" id="2937"/>
<dbReference type="eggNOG" id="KOG0021">
    <property type="taxonomic scope" value="Eukaryota"/>
</dbReference>
<dbReference type="HOGENOM" id="CLU_025152_2_1_1"/>
<dbReference type="InParanoid" id="Q5EAC2"/>
<dbReference type="OrthoDB" id="2020073at2759"/>
<dbReference type="TreeFam" id="TF105187"/>
<dbReference type="UniPathway" id="UPA00142">
    <property type="reaction ID" value="UER00210"/>
</dbReference>
<dbReference type="Proteomes" id="UP000009136">
    <property type="component" value="Unplaced"/>
</dbReference>
<dbReference type="GO" id="GO:0005829">
    <property type="term" value="C:cytosol"/>
    <property type="evidence" value="ECO:0000318"/>
    <property type="project" value="GO_Central"/>
</dbReference>
<dbReference type="GO" id="GO:0005524">
    <property type="term" value="F:ATP binding"/>
    <property type="evidence" value="ECO:0000250"/>
    <property type="project" value="UniProtKB"/>
</dbReference>
<dbReference type="GO" id="GO:0043295">
    <property type="term" value="F:glutathione binding"/>
    <property type="evidence" value="ECO:0000250"/>
    <property type="project" value="UniProtKB"/>
</dbReference>
<dbReference type="GO" id="GO:0004363">
    <property type="term" value="F:glutathione synthase activity"/>
    <property type="evidence" value="ECO:0000318"/>
    <property type="project" value="GO_Central"/>
</dbReference>
<dbReference type="GO" id="GO:0000287">
    <property type="term" value="F:magnesium ion binding"/>
    <property type="evidence" value="ECO:0000250"/>
    <property type="project" value="UniProtKB"/>
</dbReference>
<dbReference type="GO" id="GO:0042803">
    <property type="term" value="F:protein homodimerization activity"/>
    <property type="evidence" value="ECO:0000250"/>
    <property type="project" value="UniProtKB"/>
</dbReference>
<dbReference type="CDD" id="cd00228">
    <property type="entry name" value="eu-GS"/>
    <property type="match status" value="1"/>
</dbReference>
<dbReference type="FunFam" id="3.30.1490.50:FF:000001">
    <property type="entry name" value="Glutathione synthetase"/>
    <property type="match status" value="1"/>
</dbReference>
<dbReference type="FunFam" id="3.40.50.1760:FF:000003">
    <property type="entry name" value="Glutathione synthetase"/>
    <property type="match status" value="1"/>
</dbReference>
<dbReference type="Gene3D" id="3.30.1490.50">
    <property type="match status" value="1"/>
</dbReference>
<dbReference type="Gene3D" id="3.30.1490.80">
    <property type="match status" value="1"/>
</dbReference>
<dbReference type="Gene3D" id="3.30.470.20">
    <property type="entry name" value="ATP-grasp fold, B domain"/>
    <property type="match status" value="1"/>
</dbReference>
<dbReference type="Gene3D" id="3.40.50.1760">
    <property type="entry name" value="Glutathione synthase, substrate-binding domain superfamily, eukaryotic"/>
    <property type="match status" value="1"/>
</dbReference>
<dbReference type="Gene3D" id="1.10.1080.10">
    <property type="entry name" value="Glutathione Synthetase, Chain A, domain 3"/>
    <property type="match status" value="1"/>
</dbReference>
<dbReference type="InterPro" id="IPR005615">
    <property type="entry name" value="Glutathione_synthase"/>
</dbReference>
<dbReference type="InterPro" id="IPR014042">
    <property type="entry name" value="Glutathione_synthase_a-hlx"/>
</dbReference>
<dbReference type="InterPro" id="IPR014709">
    <property type="entry name" value="Glutathione_synthase_C_euk"/>
</dbReference>
<dbReference type="InterPro" id="IPR014049">
    <property type="entry name" value="Glutathione_synthase_N_euk"/>
</dbReference>
<dbReference type="InterPro" id="IPR037013">
    <property type="entry name" value="GSH-S_sub-bd_sf"/>
</dbReference>
<dbReference type="InterPro" id="IPR004887">
    <property type="entry name" value="GSH_synth_subst-bd"/>
</dbReference>
<dbReference type="InterPro" id="IPR016185">
    <property type="entry name" value="PreATP-grasp_dom_sf"/>
</dbReference>
<dbReference type="NCBIfam" id="TIGR01986">
    <property type="entry name" value="glut_syn_euk"/>
    <property type="match status" value="1"/>
</dbReference>
<dbReference type="PANTHER" id="PTHR11130">
    <property type="entry name" value="GLUTATHIONE SYNTHETASE"/>
    <property type="match status" value="1"/>
</dbReference>
<dbReference type="PANTHER" id="PTHR11130:SF0">
    <property type="entry name" value="GLUTATHIONE SYNTHETASE"/>
    <property type="match status" value="1"/>
</dbReference>
<dbReference type="Pfam" id="PF03917">
    <property type="entry name" value="GSH_synth_ATP"/>
    <property type="match status" value="1"/>
</dbReference>
<dbReference type="Pfam" id="PF03199">
    <property type="entry name" value="GSH_synthase"/>
    <property type="match status" value="1"/>
</dbReference>
<dbReference type="PIRSF" id="PIRSF001558">
    <property type="entry name" value="GSHase"/>
    <property type="match status" value="1"/>
</dbReference>
<dbReference type="SUPFAM" id="SSF56059">
    <property type="entry name" value="Glutathione synthetase ATP-binding domain-like"/>
    <property type="match status" value="1"/>
</dbReference>
<dbReference type="SUPFAM" id="SSF52440">
    <property type="entry name" value="PreATP-grasp domain"/>
    <property type="match status" value="1"/>
</dbReference>
<organism>
    <name type="scientific">Bos taurus</name>
    <name type="common">Bovine</name>
    <dbReference type="NCBI Taxonomy" id="9913"/>
    <lineage>
        <taxon>Eukaryota</taxon>
        <taxon>Metazoa</taxon>
        <taxon>Chordata</taxon>
        <taxon>Craniata</taxon>
        <taxon>Vertebrata</taxon>
        <taxon>Euteleostomi</taxon>
        <taxon>Mammalia</taxon>
        <taxon>Eutheria</taxon>
        <taxon>Laurasiatheria</taxon>
        <taxon>Artiodactyla</taxon>
        <taxon>Ruminantia</taxon>
        <taxon>Pecora</taxon>
        <taxon>Bovidae</taxon>
        <taxon>Bovinae</taxon>
        <taxon>Bos</taxon>
    </lineage>
</organism>
<accession>Q5EAC2</accession>
<accession>Q2TBS8</accession>
<keyword id="KW-0007">Acetylation</keyword>
<keyword id="KW-0067">ATP-binding</keyword>
<keyword id="KW-0317">Glutathione biosynthesis</keyword>
<keyword id="KW-0436">Ligase</keyword>
<keyword id="KW-0460">Magnesium</keyword>
<keyword id="KW-0479">Metal-binding</keyword>
<keyword id="KW-0547">Nucleotide-binding</keyword>
<keyword id="KW-0597">Phosphoprotein</keyword>
<keyword id="KW-1185">Reference proteome</keyword>
<protein>
    <recommendedName>
        <fullName evidence="2">Glutathione synthetase</fullName>
        <shortName>GSH synthetase</shortName>
        <shortName>GSH-S</shortName>
        <ecNumber evidence="2">6.3.2.3</ecNumber>
    </recommendedName>
    <alternativeName>
        <fullName>Glutathione synthase</fullName>
    </alternativeName>
</protein>
<reference key="1">
    <citation type="journal article" date="2005" name="BMC Genomics">
        <title>Characterization of 954 bovine full-CDS cDNA sequences.</title>
        <authorList>
            <person name="Harhay G.P."/>
            <person name="Sonstegard T.S."/>
            <person name="Keele J.W."/>
            <person name="Heaton M.P."/>
            <person name="Clawson M.L."/>
            <person name="Snelling W.M."/>
            <person name="Wiedmann R.T."/>
            <person name="Van Tassell C.P."/>
            <person name="Smith T.P.L."/>
        </authorList>
    </citation>
    <scope>NUCLEOTIDE SEQUENCE [LARGE SCALE MRNA]</scope>
</reference>
<reference key="2">
    <citation type="submission" date="2005-11" db="EMBL/GenBank/DDBJ databases">
        <authorList>
            <consortium name="NIH - Mammalian Gene Collection (MGC) project"/>
        </authorList>
    </citation>
    <scope>NUCLEOTIDE SEQUENCE [LARGE SCALE MRNA]</scope>
    <source>
        <strain>Crossbred X Angus</strain>
        <tissue>Liver</tissue>
    </source>
</reference>
<gene>
    <name evidence="2" type="primary">GSS</name>
</gene>
<sequence length="474" mass="52066">MATGWGSLLQDEQQLEELARQAVDRALAEGVLLRTSQAPSSSHVVSYAPFTLFPSPVPSALLEQAYAVQADFNLLVDAVSQNAVFLEQTLSSTIKRDSFTARLFDIHKQVLKEGIAQTVFLGLNRSDYMFQCNPDGSAALKQIEINTVSASFGGLASRTPAVHRHVLSVLGKTKEAAKILSNNPSKGLAMGIAKAWELYGSANAQVLLIAQEKERNIFDQRAIENELLARNIHVIRRKFEDVSEKGSLDQDRRLFMDGQEIAVVYFRDGYMPGHYSLQNWEARLLLERSCAVKCPDIATQLAGTKKVQQELSRVGVLESFLPGQPEAVARLRATFAGLYSLDLGEEGDQAITKAIAAPSCFVLKPQREGGGNNLYGEEMVQALERLKDSEERASYILMEKIEPEPFRNCLLRPGSPARVIQCISELGIFGVYVREGKTLVMNKHVGHLLRTKAIEHADGGVAAGVAVLDNPYPV</sequence>
<name>GSHB_BOVIN</name>
<evidence type="ECO:0000250" key="1"/>
<evidence type="ECO:0000250" key="2">
    <source>
        <dbReference type="UniProtKB" id="P48637"/>
    </source>
</evidence>
<evidence type="ECO:0000250" key="3">
    <source>
        <dbReference type="UniProtKB" id="P51855"/>
    </source>
</evidence>
<evidence type="ECO:0000305" key="4"/>
<feature type="initiator methionine" description="Removed" evidence="2">
    <location>
        <position position="1"/>
    </location>
</feature>
<feature type="chain" id="PRO_0000247549" description="Glutathione synthetase">
    <location>
        <begin position="2"/>
        <end position="474"/>
    </location>
</feature>
<feature type="binding site" evidence="1">
    <location>
        <position position="125"/>
    </location>
    <ligand>
        <name>substrate</name>
    </ligand>
</feature>
<feature type="binding site" evidence="1">
    <location>
        <position position="144"/>
    </location>
    <ligand>
        <name>ATP</name>
        <dbReference type="ChEBI" id="CHEBI:30616"/>
    </ligand>
</feature>
<feature type="binding site" evidence="1">
    <location>
        <position position="144"/>
    </location>
    <ligand>
        <name>Mg(2+)</name>
        <dbReference type="ChEBI" id="CHEBI:18420"/>
    </ligand>
</feature>
<feature type="binding site" evidence="1">
    <location>
        <position position="146"/>
    </location>
    <ligand>
        <name>Mg(2+)</name>
        <dbReference type="ChEBI" id="CHEBI:18420"/>
    </ligand>
</feature>
<feature type="binding site" evidence="1">
    <location>
        <begin position="148"/>
        <end position="151"/>
    </location>
    <ligand>
        <name>substrate</name>
    </ligand>
</feature>
<feature type="binding site" evidence="1">
    <location>
        <begin position="214"/>
        <end position="216"/>
    </location>
    <ligand>
        <name>substrate</name>
    </ligand>
</feature>
<feature type="binding site" evidence="1">
    <location>
        <position position="220"/>
    </location>
    <ligand>
        <name>substrate</name>
    </ligand>
</feature>
<feature type="binding site" evidence="1">
    <location>
        <begin position="267"/>
        <end position="270"/>
    </location>
    <ligand>
        <name>substrate</name>
    </ligand>
</feature>
<feature type="binding site" evidence="1">
    <location>
        <position position="305"/>
    </location>
    <ligand>
        <name>ATP</name>
        <dbReference type="ChEBI" id="CHEBI:30616"/>
    </ligand>
</feature>
<feature type="binding site" evidence="1">
    <location>
        <begin position="364"/>
        <end position="373"/>
    </location>
    <ligand>
        <name>ATP</name>
        <dbReference type="ChEBI" id="CHEBI:30616"/>
    </ligand>
</feature>
<feature type="binding site" evidence="1">
    <location>
        <position position="368"/>
    </location>
    <ligand>
        <name>Mg(2+)</name>
        <dbReference type="ChEBI" id="CHEBI:18420"/>
    </ligand>
</feature>
<feature type="binding site" evidence="1">
    <location>
        <position position="375"/>
    </location>
    <ligand>
        <name>ATP</name>
        <dbReference type="ChEBI" id="CHEBI:30616"/>
    </ligand>
</feature>
<feature type="binding site" evidence="1">
    <location>
        <begin position="398"/>
        <end position="401"/>
    </location>
    <ligand>
        <name>ATP</name>
        <dbReference type="ChEBI" id="CHEBI:30616"/>
    </ligand>
</feature>
<feature type="binding site" evidence="1">
    <location>
        <position position="425"/>
    </location>
    <ligand>
        <name>ATP</name>
        <dbReference type="ChEBI" id="CHEBI:30616"/>
    </ligand>
</feature>
<feature type="binding site" evidence="1">
    <location>
        <position position="450"/>
    </location>
    <ligand>
        <name>substrate</name>
    </ligand>
</feature>
<feature type="binding site" evidence="1">
    <location>
        <position position="452"/>
    </location>
    <ligand>
        <name>ATP</name>
        <dbReference type="ChEBI" id="CHEBI:30616"/>
    </ligand>
</feature>
<feature type="binding site" evidence="1">
    <location>
        <position position="458"/>
    </location>
    <ligand>
        <name>ATP</name>
        <dbReference type="ChEBI" id="CHEBI:30616"/>
    </ligand>
</feature>
<feature type="binding site" evidence="1">
    <location>
        <begin position="461"/>
        <end position="462"/>
    </location>
    <ligand>
        <name>substrate</name>
    </ligand>
</feature>
<feature type="modified residue" description="N-acetylalanine" evidence="2">
    <location>
        <position position="2"/>
    </location>
</feature>
<feature type="modified residue" description="Phosphoserine" evidence="2">
    <location>
        <position position="415"/>
    </location>
</feature>
<feature type="sequence conflict" description="In Ref. 2; AAI09714." evidence="4" ref="2">
    <original>K</original>
    <variation>R</variation>
    <location>
        <position position="238"/>
    </location>
</feature>
<proteinExistence type="evidence at transcript level"/>